<keyword id="KW-0169">Cobalamin biosynthesis</keyword>
<keyword id="KW-0328">Glycosyltransferase</keyword>
<keyword id="KW-0808">Transferase</keyword>
<sequence>MSLQWWRDTCREADPQMRRRAAERQDRLTKPRGSLGRLEQVAIDLAALQGRERPSLERIWVTVFAGDHGVVAEGISAYPQAVTGEMLRNFVRGGAAISVLARELGAGLEVVDLGTAFPLEALPGVRHLRLAAGTANFVEAPAMGAEQCLLALEAGRESVRRAEQAGSQLFIGGEMGIGNTTAAAAMACALLDAPASALVGPGTGLDASGVAHKAAVIERALALHGAHRADPFETLRRLGGLEIAALAGAYLACAQKGMVALVDGYICSVAALCAVRLNPACRDWLLFAHSGAEPGHRHVLEALAAQPLLDLGLRLGEGSGAALAVPLLRQACVLHAGMATFAEAAVSDRPA</sequence>
<feature type="chain" id="PRO_1000118970" description="Nicotinate-nucleotide--dimethylbenzimidazole phosphoribosyltransferase">
    <location>
        <begin position="1"/>
        <end position="351"/>
    </location>
</feature>
<feature type="active site" description="Proton acceptor" evidence="1">
    <location>
        <position position="317"/>
    </location>
</feature>
<proteinExistence type="inferred from homology"/>
<name>COBT_PSEA8</name>
<accession>B7UWH1</accession>
<organism>
    <name type="scientific">Pseudomonas aeruginosa (strain LESB58)</name>
    <dbReference type="NCBI Taxonomy" id="557722"/>
    <lineage>
        <taxon>Bacteria</taxon>
        <taxon>Pseudomonadati</taxon>
        <taxon>Pseudomonadota</taxon>
        <taxon>Gammaproteobacteria</taxon>
        <taxon>Pseudomonadales</taxon>
        <taxon>Pseudomonadaceae</taxon>
        <taxon>Pseudomonas</taxon>
    </lineage>
</organism>
<dbReference type="EC" id="2.4.2.21" evidence="1"/>
<dbReference type="EMBL" id="FM209186">
    <property type="protein sequence ID" value="CAW28787.1"/>
    <property type="molecule type" value="Genomic_DNA"/>
</dbReference>
<dbReference type="RefSeq" id="WP_010793951.1">
    <property type="nucleotide sequence ID" value="NC_011770.1"/>
</dbReference>
<dbReference type="SMR" id="B7UWH1"/>
<dbReference type="KEGG" id="pag:PLES_40331"/>
<dbReference type="HOGENOM" id="CLU_002982_0_1_6"/>
<dbReference type="UniPathway" id="UPA00061">
    <property type="reaction ID" value="UER00516"/>
</dbReference>
<dbReference type="GO" id="GO:0008939">
    <property type="term" value="F:nicotinate-nucleotide-dimethylbenzimidazole phosphoribosyltransferase activity"/>
    <property type="evidence" value="ECO:0007669"/>
    <property type="project" value="UniProtKB-UniRule"/>
</dbReference>
<dbReference type="GO" id="GO:0009236">
    <property type="term" value="P:cobalamin biosynthetic process"/>
    <property type="evidence" value="ECO:0007669"/>
    <property type="project" value="UniProtKB-KW"/>
</dbReference>
<dbReference type="CDD" id="cd02439">
    <property type="entry name" value="DMB-PRT_CobT"/>
    <property type="match status" value="1"/>
</dbReference>
<dbReference type="FunFam" id="3.40.50.10210:FF:000001">
    <property type="entry name" value="Nicotinate-nucleotide--dimethylbenzimidazole phosphoribosyltransferase"/>
    <property type="match status" value="1"/>
</dbReference>
<dbReference type="Gene3D" id="1.10.1610.10">
    <property type="match status" value="1"/>
</dbReference>
<dbReference type="Gene3D" id="3.40.50.10210">
    <property type="match status" value="1"/>
</dbReference>
<dbReference type="HAMAP" id="MF_00230">
    <property type="entry name" value="CobT"/>
    <property type="match status" value="1"/>
</dbReference>
<dbReference type="InterPro" id="IPR003200">
    <property type="entry name" value="Nict_dMeBzImd_PRibTrfase"/>
</dbReference>
<dbReference type="InterPro" id="IPR017846">
    <property type="entry name" value="Nict_dMeBzImd_PRibTrfase_bact"/>
</dbReference>
<dbReference type="InterPro" id="IPR023195">
    <property type="entry name" value="Nict_dMeBzImd_PRibTrfase_N"/>
</dbReference>
<dbReference type="InterPro" id="IPR036087">
    <property type="entry name" value="Nict_dMeBzImd_PRibTrfase_sf"/>
</dbReference>
<dbReference type="NCBIfam" id="TIGR03160">
    <property type="entry name" value="cobT_DBIPRT"/>
    <property type="match status" value="1"/>
</dbReference>
<dbReference type="NCBIfam" id="NF000996">
    <property type="entry name" value="PRK00105.1"/>
    <property type="match status" value="1"/>
</dbReference>
<dbReference type="PANTHER" id="PTHR43463">
    <property type="entry name" value="NICOTINATE-NUCLEOTIDE--DIMETHYLBENZIMIDAZOLE PHOSPHORIBOSYLTRANSFERASE"/>
    <property type="match status" value="1"/>
</dbReference>
<dbReference type="PANTHER" id="PTHR43463:SF1">
    <property type="entry name" value="NICOTINATE-NUCLEOTIDE--DIMETHYLBENZIMIDAZOLE PHOSPHORIBOSYLTRANSFERASE"/>
    <property type="match status" value="1"/>
</dbReference>
<dbReference type="Pfam" id="PF02277">
    <property type="entry name" value="DBI_PRT"/>
    <property type="match status" value="1"/>
</dbReference>
<dbReference type="SUPFAM" id="SSF52733">
    <property type="entry name" value="Nicotinate mononucleotide:5,6-dimethylbenzimidazole phosphoribosyltransferase (CobT)"/>
    <property type="match status" value="1"/>
</dbReference>
<reference key="1">
    <citation type="journal article" date="2009" name="Genome Res.">
        <title>Newly introduced genomic prophage islands are critical determinants of in vivo competitiveness in the Liverpool epidemic strain of Pseudomonas aeruginosa.</title>
        <authorList>
            <person name="Winstanley C."/>
            <person name="Langille M.G.I."/>
            <person name="Fothergill J.L."/>
            <person name="Kukavica-Ibrulj I."/>
            <person name="Paradis-Bleau C."/>
            <person name="Sanschagrin F."/>
            <person name="Thomson N.R."/>
            <person name="Winsor G.L."/>
            <person name="Quail M.A."/>
            <person name="Lennard N."/>
            <person name="Bignell A."/>
            <person name="Clarke L."/>
            <person name="Seeger K."/>
            <person name="Saunders D."/>
            <person name="Harris D."/>
            <person name="Parkhill J."/>
            <person name="Hancock R.E.W."/>
            <person name="Brinkman F.S.L."/>
            <person name="Levesque R.C."/>
        </authorList>
    </citation>
    <scope>NUCLEOTIDE SEQUENCE [LARGE SCALE GENOMIC DNA]</scope>
    <source>
        <strain>LESB58</strain>
    </source>
</reference>
<protein>
    <recommendedName>
        <fullName evidence="1">Nicotinate-nucleotide--dimethylbenzimidazole phosphoribosyltransferase</fullName>
        <shortName evidence="1">NN:DBI PRT</shortName>
        <ecNumber evidence="1">2.4.2.21</ecNumber>
    </recommendedName>
    <alternativeName>
        <fullName evidence="1">N(1)-alpha-phosphoribosyltransferase</fullName>
    </alternativeName>
</protein>
<evidence type="ECO:0000255" key="1">
    <source>
        <dbReference type="HAMAP-Rule" id="MF_00230"/>
    </source>
</evidence>
<gene>
    <name evidence="1" type="primary">cobT</name>
    <name type="ordered locus">PLES_40331</name>
</gene>
<comment type="function">
    <text evidence="1">Catalyzes the synthesis of alpha-ribazole-5'-phosphate from nicotinate mononucleotide (NAMN) and 5,6-dimethylbenzimidazole (DMB).</text>
</comment>
<comment type="catalytic activity">
    <reaction evidence="1">
        <text>5,6-dimethylbenzimidazole + nicotinate beta-D-ribonucleotide = alpha-ribazole 5'-phosphate + nicotinate + H(+)</text>
        <dbReference type="Rhea" id="RHEA:11196"/>
        <dbReference type="ChEBI" id="CHEBI:15378"/>
        <dbReference type="ChEBI" id="CHEBI:15890"/>
        <dbReference type="ChEBI" id="CHEBI:32544"/>
        <dbReference type="ChEBI" id="CHEBI:57502"/>
        <dbReference type="ChEBI" id="CHEBI:57918"/>
        <dbReference type="EC" id="2.4.2.21"/>
    </reaction>
</comment>
<comment type="pathway">
    <text evidence="1">Nucleoside biosynthesis; alpha-ribazole biosynthesis; alpha-ribazole from 5,6-dimethylbenzimidazole: step 1/2.</text>
</comment>
<comment type="similarity">
    <text evidence="1">Belongs to the CobT family.</text>
</comment>